<proteinExistence type="evidence at protein level"/>
<evidence type="ECO:0000255" key="1"/>
<evidence type="ECO:0000269" key="2">
    <source>
    </source>
</evidence>
<evidence type="ECO:0000269" key="3">
    <source>
    </source>
</evidence>
<evidence type="ECO:0000269" key="4">
    <source>
    </source>
</evidence>
<evidence type="ECO:0000303" key="5">
    <source>
    </source>
</evidence>
<evidence type="ECO:0000303" key="6">
    <source>
    </source>
</evidence>
<evidence type="ECO:0000305" key="7"/>
<evidence type="ECO:0000312" key="8">
    <source>
        <dbReference type="MGI" id="MGI:2686519"/>
    </source>
</evidence>
<reference key="1">
    <citation type="journal article" date="2005" name="Science">
        <title>The transcriptional landscape of the mammalian genome.</title>
        <authorList>
            <person name="Carninci P."/>
            <person name="Kasukawa T."/>
            <person name="Katayama S."/>
            <person name="Gough J."/>
            <person name="Frith M.C."/>
            <person name="Maeda N."/>
            <person name="Oyama R."/>
            <person name="Ravasi T."/>
            <person name="Lenhard B."/>
            <person name="Wells C."/>
            <person name="Kodzius R."/>
            <person name="Shimokawa K."/>
            <person name="Bajic V.B."/>
            <person name="Brenner S.E."/>
            <person name="Batalov S."/>
            <person name="Forrest A.R."/>
            <person name="Zavolan M."/>
            <person name="Davis M.J."/>
            <person name="Wilming L.G."/>
            <person name="Aidinis V."/>
            <person name="Allen J.E."/>
            <person name="Ambesi-Impiombato A."/>
            <person name="Apweiler R."/>
            <person name="Aturaliya R.N."/>
            <person name="Bailey T.L."/>
            <person name="Bansal M."/>
            <person name="Baxter L."/>
            <person name="Beisel K.W."/>
            <person name="Bersano T."/>
            <person name="Bono H."/>
            <person name="Chalk A.M."/>
            <person name="Chiu K.P."/>
            <person name="Choudhary V."/>
            <person name="Christoffels A."/>
            <person name="Clutterbuck D.R."/>
            <person name="Crowe M.L."/>
            <person name="Dalla E."/>
            <person name="Dalrymple B.P."/>
            <person name="de Bono B."/>
            <person name="Della Gatta G."/>
            <person name="di Bernardo D."/>
            <person name="Down T."/>
            <person name="Engstrom P."/>
            <person name="Fagiolini M."/>
            <person name="Faulkner G."/>
            <person name="Fletcher C.F."/>
            <person name="Fukushima T."/>
            <person name="Furuno M."/>
            <person name="Futaki S."/>
            <person name="Gariboldi M."/>
            <person name="Georgii-Hemming P."/>
            <person name="Gingeras T.R."/>
            <person name="Gojobori T."/>
            <person name="Green R.E."/>
            <person name="Gustincich S."/>
            <person name="Harbers M."/>
            <person name="Hayashi Y."/>
            <person name="Hensch T.K."/>
            <person name="Hirokawa N."/>
            <person name="Hill D."/>
            <person name="Huminiecki L."/>
            <person name="Iacono M."/>
            <person name="Ikeo K."/>
            <person name="Iwama A."/>
            <person name="Ishikawa T."/>
            <person name="Jakt M."/>
            <person name="Kanapin A."/>
            <person name="Katoh M."/>
            <person name="Kawasawa Y."/>
            <person name="Kelso J."/>
            <person name="Kitamura H."/>
            <person name="Kitano H."/>
            <person name="Kollias G."/>
            <person name="Krishnan S.P."/>
            <person name="Kruger A."/>
            <person name="Kummerfeld S.K."/>
            <person name="Kurochkin I.V."/>
            <person name="Lareau L.F."/>
            <person name="Lazarevic D."/>
            <person name="Lipovich L."/>
            <person name="Liu J."/>
            <person name="Liuni S."/>
            <person name="McWilliam S."/>
            <person name="Madan Babu M."/>
            <person name="Madera M."/>
            <person name="Marchionni L."/>
            <person name="Matsuda H."/>
            <person name="Matsuzawa S."/>
            <person name="Miki H."/>
            <person name="Mignone F."/>
            <person name="Miyake S."/>
            <person name="Morris K."/>
            <person name="Mottagui-Tabar S."/>
            <person name="Mulder N."/>
            <person name="Nakano N."/>
            <person name="Nakauchi H."/>
            <person name="Ng P."/>
            <person name="Nilsson R."/>
            <person name="Nishiguchi S."/>
            <person name="Nishikawa S."/>
            <person name="Nori F."/>
            <person name="Ohara O."/>
            <person name="Okazaki Y."/>
            <person name="Orlando V."/>
            <person name="Pang K.C."/>
            <person name="Pavan W.J."/>
            <person name="Pavesi G."/>
            <person name="Pesole G."/>
            <person name="Petrovsky N."/>
            <person name="Piazza S."/>
            <person name="Reed J."/>
            <person name="Reid J.F."/>
            <person name="Ring B.Z."/>
            <person name="Ringwald M."/>
            <person name="Rost B."/>
            <person name="Ruan Y."/>
            <person name="Salzberg S.L."/>
            <person name="Sandelin A."/>
            <person name="Schneider C."/>
            <person name="Schoenbach C."/>
            <person name="Sekiguchi K."/>
            <person name="Semple C.A."/>
            <person name="Seno S."/>
            <person name="Sessa L."/>
            <person name="Sheng Y."/>
            <person name="Shibata Y."/>
            <person name="Shimada H."/>
            <person name="Shimada K."/>
            <person name="Silva D."/>
            <person name="Sinclair B."/>
            <person name="Sperling S."/>
            <person name="Stupka E."/>
            <person name="Sugiura K."/>
            <person name="Sultana R."/>
            <person name="Takenaka Y."/>
            <person name="Taki K."/>
            <person name="Tammoja K."/>
            <person name="Tan S.L."/>
            <person name="Tang S."/>
            <person name="Taylor M.S."/>
            <person name="Tegner J."/>
            <person name="Teichmann S.A."/>
            <person name="Ueda H.R."/>
            <person name="van Nimwegen E."/>
            <person name="Verardo R."/>
            <person name="Wei C.L."/>
            <person name="Yagi K."/>
            <person name="Yamanishi H."/>
            <person name="Zabarovsky E."/>
            <person name="Zhu S."/>
            <person name="Zimmer A."/>
            <person name="Hide W."/>
            <person name="Bult C."/>
            <person name="Grimmond S.M."/>
            <person name="Teasdale R.D."/>
            <person name="Liu E.T."/>
            <person name="Brusic V."/>
            <person name="Quackenbush J."/>
            <person name="Wahlestedt C."/>
            <person name="Mattick J.S."/>
            <person name="Hume D.A."/>
            <person name="Kai C."/>
            <person name="Sasaki D."/>
            <person name="Tomaru Y."/>
            <person name="Fukuda S."/>
            <person name="Kanamori-Katayama M."/>
            <person name="Suzuki M."/>
            <person name="Aoki J."/>
            <person name="Arakawa T."/>
            <person name="Iida J."/>
            <person name="Imamura K."/>
            <person name="Itoh M."/>
            <person name="Kato T."/>
            <person name="Kawaji H."/>
            <person name="Kawagashira N."/>
            <person name="Kawashima T."/>
            <person name="Kojima M."/>
            <person name="Kondo S."/>
            <person name="Konno H."/>
            <person name="Nakano K."/>
            <person name="Ninomiya N."/>
            <person name="Nishio T."/>
            <person name="Okada M."/>
            <person name="Plessy C."/>
            <person name="Shibata K."/>
            <person name="Shiraki T."/>
            <person name="Suzuki S."/>
            <person name="Tagami M."/>
            <person name="Waki K."/>
            <person name="Watahiki A."/>
            <person name="Okamura-Oho Y."/>
            <person name="Suzuki H."/>
            <person name="Kawai J."/>
            <person name="Hayashizaki Y."/>
        </authorList>
    </citation>
    <scope>NUCLEOTIDE SEQUENCE [LARGE SCALE MRNA] (ISOFORM 1)</scope>
    <scope>PARTIAL NUCLEOTIDE SEQUENCE [LARGE SCALE MRNA] (ISOFORM 2)</scope>
    <source>
        <strain>C57BL/6J</strain>
        <tissue>Brain</tissue>
    </source>
</reference>
<reference key="2">
    <citation type="journal article" date="2004" name="Genome Res.">
        <title>The status, quality, and expansion of the NIH full-length cDNA project: the Mammalian Gene Collection (MGC).</title>
        <authorList>
            <consortium name="The MGC Project Team"/>
        </authorList>
    </citation>
    <scope>NUCLEOTIDE SEQUENCE [LARGE SCALE MRNA] (ISOFORM 2)</scope>
    <source>
        <tissue>Brain</tissue>
    </source>
</reference>
<reference key="3">
    <citation type="journal article" date="2011" name="Neurogenetics">
        <title>C4ORF48, a gene from the Wolf-Hirschhorn syndrome critical region, encodes a putative neuropeptide and is expressed during neocortex and cerebellar development.</title>
        <authorList>
            <person name="Endele S."/>
            <person name="Nelkenbrecher C."/>
            <person name="Bordlein A."/>
            <person name="Schlickum S."/>
            <person name="Winterpacht A."/>
        </authorList>
    </citation>
    <scope>ALTERNATIVE SPLICING (ISOFORMS 1 AND 2)</scope>
    <scope>TISSUE SPECIFICITY</scope>
    <scope>DEVELOPMENTAL STAGE</scope>
</reference>
<reference key="4">
    <citation type="journal article" date="2023" name="Nat. Commun.">
        <title>A small secreted protein NICOL regulates lumicrine-mediated sperm maturation and male fertility.</title>
        <authorList>
            <person name="Kiyozumi D."/>
            <person name="Shimada K."/>
            <person name="Chalick M."/>
            <person name="Emori C."/>
            <person name="Kodani M."/>
            <person name="Oura S."/>
            <person name="Noda T."/>
            <person name="Endo T."/>
            <person name="Matzuk M.M."/>
            <person name="Wreschner D.H."/>
            <person name="Ikawa M."/>
        </authorList>
    </citation>
    <scope>FUNCTION</scope>
    <scope>INTERACTION WITH NELL2</scope>
    <scope>SUBCELLULAR LOCATION</scope>
    <scope>TISSUE SPECIFICITY</scope>
    <scope>DEVELOPMENTAL STAGE</scope>
    <scope>DISRUPTION PHENOTYPE</scope>
</reference>
<reference key="5">
    <citation type="journal article" date="2024" name="J. Clin. Invest.">
        <title>The secreted micropeptide C4orf48 enhances renal fibrosis via an RNA-binding mechanism.</title>
        <authorList>
            <person name="Yang J."/>
            <person name="Zhuang H."/>
            <person name="Li J."/>
            <person name="Nunez-Nescolarde A.B."/>
            <person name="Luo N."/>
            <person name="Chen H."/>
            <person name="Li A."/>
            <person name="Qu X."/>
            <person name="Wang Q."/>
            <person name="Fan J."/>
            <person name="Bai X."/>
            <person name="Ye Z."/>
            <person name="Gu B."/>
            <person name="Meng Y."/>
            <person name="Zhang X."/>
            <person name="Wu D."/>
            <person name="Sia Y."/>
            <person name="Jiang X."/>
            <person name="Chen W."/>
            <person name="Combes A.N."/>
            <person name="Nikolic-Paterson D.J."/>
            <person name="Yu X."/>
        </authorList>
    </citation>
    <scope>FUNCTION</scope>
    <scope>INTERACTION WITH TFRC</scope>
    <scope>SUBCELLULAR LOCATION</scope>
    <scope>TISSUE SPECIFICITY</scope>
    <scope>DISRUPTION PHENOTYPE</scope>
</reference>
<accession>Q3UR78</accession>
<accession>B9EJP7</accession>
<accession>Q3V2U0</accession>
<name>NICOL_MOUSE</name>
<dbReference type="EMBL" id="AK131594">
    <property type="protein sequence ID" value="BAE20707.1"/>
    <property type="molecule type" value="mRNA"/>
</dbReference>
<dbReference type="EMBL" id="AK141724">
    <property type="protein sequence ID" value="BAE24810.1"/>
    <property type="status" value="ALT_INIT"/>
    <property type="molecule type" value="mRNA"/>
</dbReference>
<dbReference type="EMBL" id="BC147444">
    <property type="protein sequence ID" value="AAI47445.1"/>
    <property type="status" value="ALT_INIT"/>
    <property type="molecule type" value="mRNA"/>
</dbReference>
<dbReference type="EMBL" id="BC147468">
    <property type="protein sequence ID" value="AAI47469.1"/>
    <property type="status" value="ALT_INIT"/>
    <property type="molecule type" value="mRNA"/>
</dbReference>
<dbReference type="CCDS" id="CCDS19209.2">
    <molecule id="Q3UR78-1"/>
</dbReference>
<dbReference type="CCDS" id="CCDS80261.1">
    <molecule id="Q3UR78-1"/>
</dbReference>
<dbReference type="RefSeq" id="NP_001028630.3">
    <molecule id="Q3UR78-1"/>
    <property type="nucleotide sequence ID" value="NM_001033458.5"/>
</dbReference>
<dbReference type="RefSeq" id="NP_001297475.1">
    <molecule id="Q3UR78-1"/>
    <property type="nucleotide sequence ID" value="NM_001310546.2"/>
</dbReference>
<dbReference type="RefSeq" id="NP_001297476.1">
    <molecule id="Q3UR78-1"/>
    <property type="nucleotide sequence ID" value="NM_001310547.2"/>
</dbReference>
<dbReference type="FunCoup" id="Q3UR78">
    <property type="interactions" value="6"/>
</dbReference>
<dbReference type="PaxDb" id="10090-ENSMUSP00000092467"/>
<dbReference type="ProteomicsDB" id="279960">
    <molecule id="Q3UR78-1"/>
</dbReference>
<dbReference type="ProteomicsDB" id="279961">
    <molecule id="Q3UR78-2"/>
</dbReference>
<dbReference type="Antibodypedia" id="64905">
    <property type="antibodies" value="6 antibodies from 6 providers"/>
</dbReference>
<dbReference type="Ensembl" id="ENSMUST00000094869.12">
    <molecule id="Q3UR78-1"/>
    <property type="protein sequence ID" value="ENSMUSP00000092467.8"/>
    <property type="gene ID" value="ENSMUSG00000070858.13"/>
</dbReference>
<dbReference type="Ensembl" id="ENSMUST00000114382.2">
    <molecule id="Q3UR78-1"/>
    <property type="protein sequence ID" value="ENSMUSP00000110024.2"/>
    <property type="gene ID" value="ENSMUSG00000070858.13"/>
</dbReference>
<dbReference type="Ensembl" id="ENSMUST00000114383.8">
    <molecule id="Q3UR78-1"/>
    <property type="protein sequence ID" value="ENSMUSP00000110025.2"/>
    <property type="gene ID" value="ENSMUSG00000070858.13"/>
</dbReference>
<dbReference type="GeneID" id="381633"/>
<dbReference type="KEGG" id="mmu:381633"/>
<dbReference type="UCSC" id="uc008xbp.1">
    <molecule id="Q3UR78-1"/>
    <property type="organism name" value="mouse"/>
</dbReference>
<dbReference type="UCSC" id="uc008xbr.1">
    <molecule id="Q3UR78-2"/>
    <property type="organism name" value="mouse"/>
</dbReference>
<dbReference type="AGR" id="MGI:2686519"/>
<dbReference type="CTD" id="401115"/>
<dbReference type="MGI" id="MGI:2686519">
    <property type="gene designation" value="Nicol1"/>
</dbReference>
<dbReference type="VEuPathDB" id="HostDB:ENSMUSG00000070858"/>
<dbReference type="eggNOG" id="ENOG502S5WR">
    <property type="taxonomic scope" value="Eukaryota"/>
</dbReference>
<dbReference type="GeneTree" id="ENSGT00390000013043"/>
<dbReference type="HOGENOM" id="CLU_153985_0_0_1"/>
<dbReference type="InParanoid" id="Q3UR78"/>
<dbReference type="OMA" id="WAPSAMA"/>
<dbReference type="PhylomeDB" id="Q3UR78"/>
<dbReference type="TreeFam" id="TF336171"/>
<dbReference type="BioGRID-ORCS" id="381633">
    <property type="hits" value="1 hit in 72 CRISPR screens"/>
</dbReference>
<dbReference type="ChiTaRS" id="Gm1673">
    <property type="organism name" value="mouse"/>
</dbReference>
<dbReference type="PRO" id="PR:Q3UR78"/>
<dbReference type="Proteomes" id="UP000000589">
    <property type="component" value="Chromosome 5"/>
</dbReference>
<dbReference type="RNAct" id="Q3UR78">
    <property type="molecule type" value="protein"/>
</dbReference>
<dbReference type="Bgee" id="ENSMUSG00000070858">
    <property type="expression patterns" value="Expressed in embryonic brain and 155 other cell types or tissues"/>
</dbReference>
<dbReference type="ExpressionAtlas" id="Q3UR78">
    <property type="expression patterns" value="baseline and differential"/>
</dbReference>
<dbReference type="GO" id="GO:0005615">
    <property type="term" value="C:extracellular space"/>
    <property type="evidence" value="ECO:0000314"/>
    <property type="project" value="UniProtKB"/>
</dbReference>
<dbReference type="GO" id="GO:0048471">
    <property type="term" value="C:perinuclear region of cytoplasm"/>
    <property type="evidence" value="ECO:0000314"/>
    <property type="project" value="UniProtKB"/>
</dbReference>
<dbReference type="GO" id="GO:0003730">
    <property type="term" value="F:mRNA 3'-UTR binding"/>
    <property type="evidence" value="ECO:0000314"/>
    <property type="project" value="UniProtKB"/>
</dbReference>
<dbReference type="GO" id="GO:1990459">
    <property type="term" value="F:transferrin receptor binding"/>
    <property type="evidence" value="ECO:0000353"/>
    <property type="project" value="UniProtKB"/>
</dbReference>
<dbReference type="GO" id="GO:0070935">
    <property type="term" value="P:3'-UTR-mediated mRNA stabilization"/>
    <property type="evidence" value="ECO:0000314"/>
    <property type="project" value="UniProtKB"/>
</dbReference>
<dbReference type="GO" id="GO:0007283">
    <property type="term" value="P:spermatogenesis"/>
    <property type="evidence" value="ECO:0000315"/>
    <property type="project" value="UniProtKB"/>
</dbReference>
<dbReference type="InterPro" id="IPR028147">
    <property type="entry name" value="NICOL"/>
</dbReference>
<dbReference type="PANTHER" id="PTHR35451">
    <property type="entry name" value="NEUROPEPTIDE-LIKE PROTEIN C4ORF48"/>
    <property type="match status" value="1"/>
</dbReference>
<dbReference type="PANTHER" id="PTHR35451:SF1">
    <property type="entry name" value="NEUROPEPTIDE-LIKE PROTEIN C4ORF48"/>
    <property type="match status" value="1"/>
</dbReference>
<dbReference type="Pfam" id="PF15161">
    <property type="entry name" value="Neuropep_like"/>
    <property type="match status" value="1"/>
</dbReference>
<gene>
    <name evidence="8" type="primary">Nicol1</name>
    <name evidence="8" type="synonym">Gm1673</name>
</gene>
<sequence length="90" mass="9806">MAPALRSLLSPRTLLLLLLSLALLGARAEPATGSAVPAQSRPCVDCHAFEFMQRALQDLRKTAYSLDARTETLLLQAERRALCACWPAGR</sequence>
<feature type="signal peptide" evidence="1">
    <location>
        <begin position="1"/>
        <end position="28"/>
    </location>
</feature>
<feature type="chain" id="PRO_0000342195" description="NELL2-interacting cell ontogeny regulator 1">
    <location>
        <begin position="29"/>
        <end position="90"/>
    </location>
</feature>
<feature type="splice variant" id="VSP_034397" description="In isoform 2." evidence="5">
    <original>M</original>
    <variation>MTTTSGGPGWGRLGRMRARAGRGRSSRVARAACSRFLEPRAAWAPSAM</variation>
    <location>
        <position position="1"/>
    </location>
</feature>
<organism>
    <name type="scientific">Mus musculus</name>
    <name type="common">Mouse</name>
    <dbReference type="NCBI Taxonomy" id="10090"/>
    <lineage>
        <taxon>Eukaryota</taxon>
        <taxon>Metazoa</taxon>
        <taxon>Chordata</taxon>
        <taxon>Craniata</taxon>
        <taxon>Vertebrata</taxon>
        <taxon>Euteleostomi</taxon>
        <taxon>Mammalia</taxon>
        <taxon>Eutheria</taxon>
        <taxon>Euarchontoglires</taxon>
        <taxon>Glires</taxon>
        <taxon>Rodentia</taxon>
        <taxon>Myomorpha</taxon>
        <taxon>Muroidea</taxon>
        <taxon>Muridae</taxon>
        <taxon>Murinae</taxon>
        <taxon>Mus</taxon>
        <taxon>Mus</taxon>
    </lineage>
</organism>
<keyword id="KW-0025">Alternative splicing</keyword>
<keyword id="KW-0963">Cytoplasm</keyword>
<keyword id="KW-1185">Reference proteome</keyword>
<keyword id="KW-0694">RNA-binding</keyword>
<keyword id="KW-0964">Secreted</keyword>
<keyword id="KW-0732">Signal</keyword>
<protein>
    <recommendedName>
        <fullName evidence="8">NELL2-interacting cell ontogeny regulator 1</fullName>
    </recommendedName>
    <alternativeName>
        <fullName evidence="6">NELL2-interacting cofactor for lumicrine signaling</fullName>
        <shortName evidence="6">NICOL</shortName>
    </alternativeName>
</protein>
<comment type="function">
    <text evidence="3 4">mRNA-binding protein which interacts with a range of target mRNAs including SERPINE1, ACTA2, CCN2 and COL4A1 and may promote extracellular matrix production (PubMed:38625739). Binds to the 3'-UTR of SERPINE1 mRNA and stabilizes the mRNA, possibly by competing for binding with SERBP1 and preventing SERBP1-mediated mRNA degradation (PubMed:38625739). Also binds to the 3'-UTR of ACTA2 (PubMed:38625739). Testis-derived lumicrine factor that triggers epididymal differentiation and sperm maturation (PubMed:37095084).</text>
</comment>
<comment type="subunit">
    <text evidence="3 4">Interacts with NELL2; triggers epididymal differentiation (PubMed:37095084). Interacts with cell surface receptor TFRC; the interaction mediates uptake of NICOL1 into fibroblasts (PubMed:38625739).</text>
</comment>
<comment type="subcellular location">
    <subcellularLocation>
        <location evidence="3 4">Secreted</location>
    </subcellularLocation>
    <subcellularLocation>
        <location evidence="4">Cytoplasm</location>
        <location evidence="4">Perinuclear region</location>
    </subcellularLocation>
    <text evidence="4">Detected in the perinuclear region of fibroblasts.</text>
</comment>
<comment type="alternative products">
    <event type="alternative splicing"/>
    <isoform>
        <id>Q3UR78-1</id>
        <name>1</name>
        <sequence type="displayed"/>
    </isoform>
    <isoform>
        <id>Q3UR78-2</id>
        <name>2</name>
        <sequence type="described" ref="VSP_034397"/>
    </isoform>
</comment>
<comment type="tissue specificity">
    <text evidence="2 3 4">Expression is enriched in both male and female reproductive organs, including the testis, epididymis, seminal vesicles, coagulating glands, ovary and uterus, and in various non-reproductive organs such as brain, thymus and liver (PubMed:37095084). In testis, expressed in both germ cells and Sertoli cells (PubMed:37095084). Also expressed at low levels in the kidney (PubMed:38625739). Expressed during neocortex and cerebellum development (PubMed:21287218).</text>
</comment>
<comment type="developmental stage">
    <text evidence="2 3">First expressed in the cerebral cortex after the preplate stage (&gt;E12). At embryonic stage 15.5 dpc and up to 17.5 dpc, it is expressed in cortical plate and in the marginal zone, whereas in adult brain, it is present in all cortical and subcortical regions of the brain. In the developing cerebellum, expressed in the intermediate zone at stage 17.5 dpc, in the molecular layer in newborn, and in the granular as well as molecular layer in adult. In the adult brain, expression in interneurons is also observed (PubMed:21287218). Expression in the testis increases postnatally (PubMed:37095084).</text>
</comment>
<comment type="disruption phenotype">
    <text evidence="3 4">Deficient males are sterile, whereas females are fertile (PubMed:37095084, PubMed:38625739). Deficient mice display defective sperm migration from the uterus into the oviduct and poor sperm binding to the egg zona pellucida (PubMed:37095084). Mice are infertile because of deficient epididymal differentiation and deficient sperm maturation (PubMed:37095084). Suppression of renal fibrosis in chronic kidney disease models (PubMed:38625739).</text>
</comment>
<comment type="miscellaneous">
    <text evidence="4">Up-regulated in kidney and serum in an experimental model of chronic kidney disease (CKD) and enhances renal fibrosis so may have promise as a biomarker of renal fibrosis and as a therapeutic agent for CKD.</text>
</comment>
<comment type="similarity">
    <text evidence="7">Belongs to the NICOL family.</text>
</comment>
<comment type="sequence caution" evidence="7">
    <conflict type="erroneous initiation">
        <sequence resource="EMBL-CDS" id="AAI47445"/>
    </conflict>
    <text>Truncated N-terminus.</text>
</comment>
<comment type="sequence caution" evidence="7">
    <conflict type="erroneous initiation">
        <sequence resource="EMBL-CDS" id="AAI47469"/>
    </conflict>
    <text>Truncated N-terminus.</text>
</comment>
<comment type="sequence caution" evidence="7">
    <conflict type="erroneous initiation">
        <sequence resource="EMBL-CDS" id="BAE24810"/>
    </conflict>
    <text>Truncated N-terminus.</text>
</comment>